<sequence length="375" mass="42928">MRLNELTLQHYRNYETVSLDFPKTLNLFLGENAQGKTNLLESIYVLAMTRSHRTSNEKELIGWEQAAAKISGVVEKKTGTVPLEILISNKGRKTKVNHIEQKRLSAYIGQLNVILFAPEDLSLVKGSPQVRRKFIDMELGQVSPIYLYDLVQYQSVLKQRNQYLKQLAEKKQTDTVYLDILTEQLAEFGGKVLYARLGFLKKLEHWANLLHQKISHGRETLTIDYASSIPIDNTDLSLEALQNQLLQQLMNNRKRELFKANTFLGPHRDDLLFIVNGQNVQTYGSQGQQRTTALSIKLAEIDLMHSETGEYPVLLLDDVMSELDNERQIHLLETIEGKVQTFLTTTSLDHIKDKLTVEPDIFYVQQGKIERNSAT</sequence>
<protein>
    <recommendedName>
        <fullName evidence="1">DNA replication and repair protein RecF</fullName>
    </recommendedName>
</protein>
<dbReference type="EMBL" id="AE016830">
    <property type="protein sequence ID" value="AAO79889.1"/>
    <property type="molecule type" value="Genomic_DNA"/>
</dbReference>
<dbReference type="RefSeq" id="NP_813817.1">
    <property type="nucleotide sequence ID" value="NC_004668.1"/>
</dbReference>
<dbReference type="RefSeq" id="WP_002356016.1">
    <property type="nucleotide sequence ID" value="NZ_KE136524.1"/>
</dbReference>
<dbReference type="SMR" id="Q839Z2"/>
<dbReference type="STRING" id="226185.EF_0004"/>
<dbReference type="EnsemblBacteria" id="AAO79889">
    <property type="protein sequence ID" value="AAO79889"/>
    <property type="gene ID" value="EF_0004"/>
</dbReference>
<dbReference type="GeneID" id="60892567"/>
<dbReference type="KEGG" id="efa:EF0004"/>
<dbReference type="PATRIC" id="fig|226185.45.peg.250"/>
<dbReference type="eggNOG" id="COG1195">
    <property type="taxonomic scope" value="Bacteria"/>
</dbReference>
<dbReference type="HOGENOM" id="CLU_040267_0_1_9"/>
<dbReference type="Proteomes" id="UP000001415">
    <property type="component" value="Chromosome"/>
</dbReference>
<dbReference type="GO" id="GO:0005737">
    <property type="term" value="C:cytoplasm"/>
    <property type="evidence" value="ECO:0007669"/>
    <property type="project" value="UniProtKB-SubCell"/>
</dbReference>
<dbReference type="GO" id="GO:0005524">
    <property type="term" value="F:ATP binding"/>
    <property type="evidence" value="ECO:0007669"/>
    <property type="project" value="UniProtKB-UniRule"/>
</dbReference>
<dbReference type="GO" id="GO:0003697">
    <property type="term" value="F:single-stranded DNA binding"/>
    <property type="evidence" value="ECO:0007669"/>
    <property type="project" value="UniProtKB-UniRule"/>
</dbReference>
<dbReference type="GO" id="GO:0006260">
    <property type="term" value="P:DNA replication"/>
    <property type="evidence" value="ECO:0007669"/>
    <property type="project" value="UniProtKB-UniRule"/>
</dbReference>
<dbReference type="GO" id="GO:0000731">
    <property type="term" value="P:DNA synthesis involved in DNA repair"/>
    <property type="evidence" value="ECO:0007669"/>
    <property type="project" value="TreeGrafter"/>
</dbReference>
<dbReference type="GO" id="GO:0006302">
    <property type="term" value="P:double-strand break repair"/>
    <property type="evidence" value="ECO:0007669"/>
    <property type="project" value="TreeGrafter"/>
</dbReference>
<dbReference type="GO" id="GO:0009432">
    <property type="term" value="P:SOS response"/>
    <property type="evidence" value="ECO:0007669"/>
    <property type="project" value="UniProtKB-UniRule"/>
</dbReference>
<dbReference type="CDD" id="cd03242">
    <property type="entry name" value="ABC_RecF"/>
    <property type="match status" value="1"/>
</dbReference>
<dbReference type="FunFam" id="1.20.1050.90:FF:000002">
    <property type="entry name" value="DNA replication and repair protein RecF"/>
    <property type="match status" value="1"/>
</dbReference>
<dbReference type="Gene3D" id="3.40.50.300">
    <property type="entry name" value="P-loop containing nucleotide triphosphate hydrolases"/>
    <property type="match status" value="1"/>
</dbReference>
<dbReference type="Gene3D" id="1.20.1050.90">
    <property type="entry name" value="RecF/RecN/SMC, N-terminal domain"/>
    <property type="match status" value="1"/>
</dbReference>
<dbReference type="HAMAP" id="MF_00365">
    <property type="entry name" value="RecF"/>
    <property type="match status" value="1"/>
</dbReference>
<dbReference type="InterPro" id="IPR001238">
    <property type="entry name" value="DNA-binding_RecF"/>
</dbReference>
<dbReference type="InterPro" id="IPR018078">
    <property type="entry name" value="DNA-binding_RecF_CS"/>
</dbReference>
<dbReference type="InterPro" id="IPR027417">
    <property type="entry name" value="P-loop_NTPase"/>
</dbReference>
<dbReference type="InterPro" id="IPR003395">
    <property type="entry name" value="RecF/RecN/SMC_N"/>
</dbReference>
<dbReference type="InterPro" id="IPR042174">
    <property type="entry name" value="RecF_2"/>
</dbReference>
<dbReference type="NCBIfam" id="TIGR00611">
    <property type="entry name" value="recf"/>
    <property type="match status" value="1"/>
</dbReference>
<dbReference type="PANTHER" id="PTHR32182">
    <property type="entry name" value="DNA REPLICATION AND REPAIR PROTEIN RECF"/>
    <property type="match status" value="1"/>
</dbReference>
<dbReference type="PANTHER" id="PTHR32182:SF0">
    <property type="entry name" value="DNA REPLICATION AND REPAIR PROTEIN RECF"/>
    <property type="match status" value="1"/>
</dbReference>
<dbReference type="Pfam" id="PF02463">
    <property type="entry name" value="SMC_N"/>
    <property type="match status" value="1"/>
</dbReference>
<dbReference type="SUPFAM" id="SSF52540">
    <property type="entry name" value="P-loop containing nucleoside triphosphate hydrolases"/>
    <property type="match status" value="1"/>
</dbReference>
<dbReference type="PROSITE" id="PS00617">
    <property type="entry name" value="RECF_1"/>
    <property type="match status" value="1"/>
</dbReference>
<dbReference type="PROSITE" id="PS00618">
    <property type="entry name" value="RECF_2"/>
    <property type="match status" value="1"/>
</dbReference>
<feature type="chain" id="PRO_0000196417" description="DNA replication and repair protein RecF">
    <location>
        <begin position="1"/>
        <end position="375"/>
    </location>
</feature>
<feature type="binding site" evidence="1">
    <location>
        <begin position="30"/>
        <end position="37"/>
    </location>
    <ligand>
        <name>ATP</name>
        <dbReference type="ChEBI" id="CHEBI:30616"/>
    </ligand>
</feature>
<gene>
    <name evidence="1" type="primary">recF</name>
    <name type="ordered locus">EF_0004</name>
</gene>
<name>RECF_ENTFA</name>
<reference key="1">
    <citation type="journal article" date="2003" name="Science">
        <title>Role of mobile DNA in the evolution of vancomycin-resistant Enterococcus faecalis.</title>
        <authorList>
            <person name="Paulsen I.T."/>
            <person name="Banerjei L."/>
            <person name="Myers G.S.A."/>
            <person name="Nelson K.E."/>
            <person name="Seshadri R."/>
            <person name="Read T.D."/>
            <person name="Fouts D.E."/>
            <person name="Eisen J.A."/>
            <person name="Gill S.R."/>
            <person name="Heidelberg J.F."/>
            <person name="Tettelin H."/>
            <person name="Dodson R.J."/>
            <person name="Umayam L.A."/>
            <person name="Brinkac L.M."/>
            <person name="Beanan M.J."/>
            <person name="Daugherty S.C."/>
            <person name="DeBoy R.T."/>
            <person name="Durkin S.A."/>
            <person name="Kolonay J.F."/>
            <person name="Madupu R."/>
            <person name="Nelson W.C."/>
            <person name="Vamathevan J.J."/>
            <person name="Tran B."/>
            <person name="Upton J."/>
            <person name="Hansen T."/>
            <person name="Shetty J."/>
            <person name="Khouri H.M."/>
            <person name="Utterback T.R."/>
            <person name="Radune D."/>
            <person name="Ketchum K.A."/>
            <person name="Dougherty B.A."/>
            <person name="Fraser C.M."/>
        </authorList>
    </citation>
    <scope>NUCLEOTIDE SEQUENCE [LARGE SCALE GENOMIC DNA]</scope>
    <source>
        <strain>ATCC 700802 / V583</strain>
    </source>
</reference>
<proteinExistence type="inferred from homology"/>
<accession>Q839Z2</accession>
<keyword id="KW-0067">ATP-binding</keyword>
<keyword id="KW-0963">Cytoplasm</keyword>
<keyword id="KW-0227">DNA damage</keyword>
<keyword id="KW-0234">DNA repair</keyword>
<keyword id="KW-0235">DNA replication</keyword>
<keyword id="KW-0238">DNA-binding</keyword>
<keyword id="KW-0547">Nucleotide-binding</keyword>
<keyword id="KW-1185">Reference proteome</keyword>
<keyword id="KW-0742">SOS response</keyword>
<comment type="function">
    <text evidence="1">The RecF protein is involved in DNA metabolism; it is required for DNA replication and normal SOS inducibility. RecF binds preferentially to single-stranded, linear DNA. It also seems to bind ATP.</text>
</comment>
<comment type="subcellular location">
    <subcellularLocation>
        <location evidence="1">Cytoplasm</location>
    </subcellularLocation>
</comment>
<comment type="similarity">
    <text evidence="1">Belongs to the RecF family.</text>
</comment>
<organism>
    <name type="scientific">Enterococcus faecalis (strain ATCC 700802 / V583)</name>
    <dbReference type="NCBI Taxonomy" id="226185"/>
    <lineage>
        <taxon>Bacteria</taxon>
        <taxon>Bacillati</taxon>
        <taxon>Bacillota</taxon>
        <taxon>Bacilli</taxon>
        <taxon>Lactobacillales</taxon>
        <taxon>Enterococcaceae</taxon>
        <taxon>Enterococcus</taxon>
    </lineage>
</organism>
<evidence type="ECO:0000255" key="1">
    <source>
        <dbReference type="HAMAP-Rule" id="MF_00365"/>
    </source>
</evidence>